<keyword id="KW-0158">Chromosome</keyword>
<keyword id="KW-0903">Direct protein sequencing</keyword>
<keyword id="KW-0238">DNA-binding</keyword>
<keyword id="KW-0539">Nucleus</keyword>
<organism>
    <name type="scientific">Ensis minor</name>
    <name type="common">Razor shell</name>
    <name type="synonym">Minor jackknife clam</name>
    <dbReference type="NCBI Taxonomy" id="6587"/>
    <lineage>
        <taxon>Eukaryota</taxon>
        <taxon>Metazoa</taxon>
        <taxon>Spiralia</taxon>
        <taxon>Lophotrochozoa</taxon>
        <taxon>Mollusca</taxon>
        <taxon>Bivalvia</taxon>
        <taxon>Autobranchia</taxon>
        <taxon>Heteroconchia</taxon>
        <taxon>Euheterodonta</taxon>
        <taxon>Imparidentia</taxon>
        <taxon>Adapedonta</taxon>
        <taxon>Solenoidea</taxon>
        <taxon>Pharidae</taxon>
        <taxon>Ensis</taxon>
    </lineage>
</organism>
<feature type="chain" id="PRO_0000196012" description="Histone H1-like protein EM5">
    <location>
        <begin position="1" status="less than"/>
        <end position="36" status="greater than"/>
    </location>
</feature>
<feature type="domain" description="H15" evidence="1">
    <location>
        <begin position="1"/>
        <end position="36"/>
    </location>
</feature>
<feature type="non-terminal residue">
    <location>
        <position position="1"/>
    </location>
</feature>
<feature type="non-terminal residue">
    <location>
        <position position="36"/>
    </location>
</feature>
<evidence type="ECO:0000255" key="1">
    <source>
        <dbReference type="PROSITE-ProRule" id="PRU00837"/>
    </source>
</evidence>
<comment type="subcellular location">
    <subcellularLocation>
        <location>Nucleus</location>
    </subcellularLocation>
    <subcellularLocation>
        <location>Chromosome</location>
    </subcellularLocation>
</comment>
<comment type="tissue specificity">
    <text>Sperm.</text>
</comment>
<comment type="similarity">
    <text evidence="1">Belongs to the histone H1/H5 family.</text>
</comment>
<name>H1L5_ENSMI</name>
<reference key="1">
    <citation type="journal article" date="1992" name="Biochim. Biophys. Acta">
        <title>Molluscan sperm proteins: Ensis minor.</title>
        <authorList>
            <person name="Giancotti V."/>
            <person name="Buratti E."/>
            <person name="Santucci A."/>
            <person name="Neri P."/>
            <person name="Crane-Robinson C."/>
        </authorList>
    </citation>
    <scope>PROTEIN SEQUENCE</scope>
    <source>
        <tissue>Sperm</tissue>
    </source>
</reference>
<proteinExistence type="evidence at protein level"/>
<sequence>MITAAVGALKERGGSSRQAILKYIQANFKVQANPAA</sequence>
<protein>
    <recommendedName>
        <fullName>Histone H1-like protein EM5</fullName>
    </recommendedName>
</protein>
<accession>P27203</accession>
<dbReference type="PIR" id="S21224">
    <property type="entry name" value="S21224"/>
</dbReference>
<dbReference type="SMR" id="P27203"/>
<dbReference type="GO" id="GO:0000786">
    <property type="term" value="C:nucleosome"/>
    <property type="evidence" value="ECO:0007669"/>
    <property type="project" value="InterPro"/>
</dbReference>
<dbReference type="GO" id="GO:0005634">
    <property type="term" value="C:nucleus"/>
    <property type="evidence" value="ECO:0007669"/>
    <property type="project" value="UniProtKB-SubCell"/>
</dbReference>
<dbReference type="GO" id="GO:0003677">
    <property type="term" value="F:DNA binding"/>
    <property type="evidence" value="ECO:0007669"/>
    <property type="project" value="UniProtKB-KW"/>
</dbReference>
<dbReference type="GO" id="GO:0006334">
    <property type="term" value="P:nucleosome assembly"/>
    <property type="evidence" value="ECO:0007669"/>
    <property type="project" value="InterPro"/>
</dbReference>
<dbReference type="Gene3D" id="1.10.10.10">
    <property type="entry name" value="Winged helix-like DNA-binding domain superfamily/Winged helix DNA-binding domain"/>
    <property type="match status" value="1"/>
</dbReference>
<dbReference type="InterPro" id="IPR005818">
    <property type="entry name" value="Histone_H1/H5_H15"/>
</dbReference>
<dbReference type="InterPro" id="IPR036388">
    <property type="entry name" value="WH-like_DNA-bd_sf"/>
</dbReference>
<dbReference type="InterPro" id="IPR036390">
    <property type="entry name" value="WH_DNA-bd_sf"/>
</dbReference>
<dbReference type="Pfam" id="PF00538">
    <property type="entry name" value="Linker_histone"/>
    <property type="match status" value="1"/>
</dbReference>
<dbReference type="SUPFAM" id="SSF46785">
    <property type="entry name" value="Winged helix' DNA-binding domain"/>
    <property type="match status" value="1"/>
</dbReference>
<dbReference type="PROSITE" id="PS51504">
    <property type="entry name" value="H15"/>
    <property type="match status" value="1"/>
</dbReference>